<dbReference type="EMBL" id="CP000685">
    <property type="protein sequence ID" value="ABQ04578.1"/>
    <property type="molecule type" value="Genomic_DNA"/>
</dbReference>
<dbReference type="RefSeq" id="WP_012023622.1">
    <property type="nucleotide sequence ID" value="NZ_MUGZ01000017.1"/>
</dbReference>
<dbReference type="SMR" id="A5FJP6"/>
<dbReference type="STRING" id="376686.Fjoh_1546"/>
<dbReference type="KEGG" id="fjo:Fjoh_1546"/>
<dbReference type="eggNOG" id="COG0211">
    <property type="taxonomic scope" value="Bacteria"/>
</dbReference>
<dbReference type="HOGENOM" id="CLU_095424_4_1_10"/>
<dbReference type="OrthoDB" id="9803474at2"/>
<dbReference type="Proteomes" id="UP000006694">
    <property type="component" value="Chromosome"/>
</dbReference>
<dbReference type="GO" id="GO:0022625">
    <property type="term" value="C:cytosolic large ribosomal subunit"/>
    <property type="evidence" value="ECO:0007669"/>
    <property type="project" value="TreeGrafter"/>
</dbReference>
<dbReference type="GO" id="GO:0003735">
    <property type="term" value="F:structural constituent of ribosome"/>
    <property type="evidence" value="ECO:0007669"/>
    <property type="project" value="InterPro"/>
</dbReference>
<dbReference type="GO" id="GO:0006412">
    <property type="term" value="P:translation"/>
    <property type="evidence" value="ECO:0007669"/>
    <property type="project" value="UniProtKB-UniRule"/>
</dbReference>
<dbReference type="FunFam" id="2.40.50.100:FF:000060">
    <property type="entry name" value="Apicoplast ribosomal protein L27"/>
    <property type="match status" value="1"/>
</dbReference>
<dbReference type="Gene3D" id="2.40.50.100">
    <property type="match status" value="1"/>
</dbReference>
<dbReference type="HAMAP" id="MF_00539">
    <property type="entry name" value="Ribosomal_bL27"/>
    <property type="match status" value="1"/>
</dbReference>
<dbReference type="InterPro" id="IPR001684">
    <property type="entry name" value="Ribosomal_bL27"/>
</dbReference>
<dbReference type="InterPro" id="IPR018261">
    <property type="entry name" value="Ribosomal_bL27_CS"/>
</dbReference>
<dbReference type="NCBIfam" id="TIGR00062">
    <property type="entry name" value="L27"/>
    <property type="match status" value="1"/>
</dbReference>
<dbReference type="PANTHER" id="PTHR15893:SF0">
    <property type="entry name" value="LARGE RIBOSOMAL SUBUNIT PROTEIN BL27M"/>
    <property type="match status" value="1"/>
</dbReference>
<dbReference type="PANTHER" id="PTHR15893">
    <property type="entry name" value="RIBOSOMAL PROTEIN L27"/>
    <property type="match status" value="1"/>
</dbReference>
<dbReference type="Pfam" id="PF01016">
    <property type="entry name" value="Ribosomal_L27"/>
    <property type="match status" value="1"/>
</dbReference>
<dbReference type="PRINTS" id="PR00063">
    <property type="entry name" value="RIBOSOMALL27"/>
</dbReference>
<dbReference type="SUPFAM" id="SSF110324">
    <property type="entry name" value="Ribosomal L27 protein-like"/>
    <property type="match status" value="1"/>
</dbReference>
<dbReference type="PROSITE" id="PS00831">
    <property type="entry name" value="RIBOSOMAL_L27"/>
    <property type="match status" value="1"/>
</dbReference>
<gene>
    <name evidence="1" type="primary">rpmA</name>
    <name type="ordered locus">Fjoh_1546</name>
</gene>
<evidence type="ECO:0000255" key="1">
    <source>
        <dbReference type="HAMAP-Rule" id="MF_00539"/>
    </source>
</evidence>
<evidence type="ECO:0000305" key="2"/>
<sequence>MAHKKGVGSSKNGRESESKRLGVKIYGGQAAIAGNIIVRQRGSKHNPGENVYISKDHTLHARVAGVVKFQKKRDNKSYVSIIPFEA</sequence>
<keyword id="KW-0687">Ribonucleoprotein</keyword>
<keyword id="KW-0689">Ribosomal protein</keyword>
<reference key="1">
    <citation type="journal article" date="2009" name="Appl. Environ. Microbiol.">
        <title>Novel features of the polysaccharide-digesting gliding bacterium Flavobacterium johnsoniae as revealed by genome sequence analysis.</title>
        <authorList>
            <person name="McBride M.J."/>
            <person name="Xie G."/>
            <person name="Martens E.C."/>
            <person name="Lapidus A."/>
            <person name="Henrissat B."/>
            <person name="Rhodes R.G."/>
            <person name="Goltsman E."/>
            <person name="Wang W."/>
            <person name="Xu J."/>
            <person name="Hunnicutt D.W."/>
            <person name="Staroscik A.M."/>
            <person name="Hoover T.R."/>
            <person name="Cheng Y.Q."/>
            <person name="Stein J.L."/>
        </authorList>
    </citation>
    <scope>NUCLEOTIDE SEQUENCE [LARGE SCALE GENOMIC DNA]</scope>
    <source>
        <strain>ATCC 17061 / DSM 2064 / JCM 8514 / BCRC 14874 / CCUG 350202 / NBRC 14942 / NCIMB 11054 / UW101</strain>
    </source>
</reference>
<protein>
    <recommendedName>
        <fullName evidence="1">Large ribosomal subunit protein bL27</fullName>
    </recommendedName>
    <alternativeName>
        <fullName evidence="2">50S ribosomal protein L27</fullName>
    </alternativeName>
</protein>
<feature type="chain" id="PRO_1000081889" description="Large ribosomal subunit protein bL27">
    <location>
        <begin position="1"/>
        <end position="86"/>
    </location>
</feature>
<comment type="similarity">
    <text evidence="1">Belongs to the bacterial ribosomal protein bL27 family.</text>
</comment>
<organism>
    <name type="scientific">Flavobacterium johnsoniae (strain ATCC 17061 / DSM 2064 / JCM 8514 / BCRC 14874 / CCUG 350202 / NBRC 14942 / NCIMB 11054 / UW101)</name>
    <name type="common">Cytophaga johnsonae</name>
    <dbReference type="NCBI Taxonomy" id="376686"/>
    <lineage>
        <taxon>Bacteria</taxon>
        <taxon>Pseudomonadati</taxon>
        <taxon>Bacteroidota</taxon>
        <taxon>Flavobacteriia</taxon>
        <taxon>Flavobacteriales</taxon>
        <taxon>Flavobacteriaceae</taxon>
        <taxon>Flavobacterium</taxon>
    </lineage>
</organism>
<accession>A5FJP6</accession>
<proteinExistence type="inferred from homology"/>
<name>RL27_FLAJ1</name>